<evidence type="ECO:0000255" key="1">
    <source>
        <dbReference type="PROSITE-ProRule" id="PRU00238"/>
    </source>
</evidence>
<protein>
    <recommendedName>
        <fullName>Hemoglobin subunit alpha-1</fullName>
    </recommendedName>
    <alternativeName>
        <fullName>Alpha-1-globin</fullName>
    </alternativeName>
    <alternativeName>
        <fullName>Hemoglobin alpha-1 chain</fullName>
    </alternativeName>
</protein>
<comment type="function">
    <text>Involved in oxygen transport from the lung to the various peripheral tissues.</text>
</comment>
<comment type="subunit">
    <text>Heterotetramer of two alpha chains and two beta chains.</text>
</comment>
<comment type="tissue specificity">
    <text>Red blood cells.</text>
</comment>
<comment type="miscellaneous">
    <text>Echidnas have a major hemoglobin I (with alpha-1 chain variants A, B, and C) and a minor hemoglobin II (with alpha-2 chain variants A and B). All hemoglobins may have the same beta chain. The sequences of both alpha-1 A and B variants differ from that of the alpha-2 A variant at nine positions.</text>
</comment>
<comment type="miscellaneous">
    <text>The sequence shown is that of alpha-1 B.</text>
</comment>
<comment type="similarity">
    <text evidence="1">Belongs to the globin family.</text>
</comment>
<dbReference type="PIR" id="A90089">
    <property type="entry name" value="HATG"/>
</dbReference>
<dbReference type="SMR" id="P01977"/>
<dbReference type="GO" id="GO:0072562">
    <property type="term" value="C:blood microparticle"/>
    <property type="evidence" value="ECO:0007669"/>
    <property type="project" value="TreeGrafter"/>
</dbReference>
<dbReference type="GO" id="GO:0031838">
    <property type="term" value="C:haptoglobin-hemoglobin complex"/>
    <property type="evidence" value="ECO:0007669"/>
    <property type="project" value="TreeGrafter"/>
</dbReference>
<dbReference type="GO" id="GO:0005833">
    <property type="term" value="C:hemoglobin complex"/>
    <property type="evidence" value="ECO:0007669"/>
    <property type="project" value="InterPro"/>
</dbReference>
<dbReference type="GO" id="GO:0031720">
    <property type="term" value="F:haptoglobin binding"/>
    <property type="evidence" value="ECO:0007669"/>
    <property type="project" value="TreeGrafter"/>
</dbReference>
<dbReference type="GO" id="GO:0020037">
    <property type="term" value="F:heme binding"/>
    <property type="evidence" value="ECO:0007669"/>
    <property type="project" value="InterPro"/>
</dbReference>
<dbReference type="GO" id="GO:0005506">
    <property type="term" value="F:iron ion binding"/>
    <property type="evidence" value="ECO:0007669"/>
    <property type="project" value="InterPro"/>
</dbReference>
<dbReference type="GO" id="GO:0043177">
    <property type="term" value="F:organic acid binding"/>
    <property type="evidence" value="ECO:0007669"/>
    <property type="project" value="TreeGrafter"/>
</dbReference>
<dbReference type="GO" id="GO:0019825">
    <property type="term" value="F:oxygen binding"/>
    <property type="evidence" value="ECO:0007669"/>
    <property type="project" value="InterPro"/>
</dbReference>
<dbReference type="GO" id="GO:0005344">
    <property type="term" value="F:oxygen carrier activity"/>
    <property type="evidence" value="ECO:0007669"/>
    <property type="project" value="UniProtKB-KW"/>
</dbReference>
<dbReference type="GO" id="GO:0004601">
    <property type="term" value="F:peroxidase activity"/>
    <property type="evidence" value="ECO:0007669"/>
    <property type="project" value="TreeGrafter"/>
</dbReference>
<dbReference type="GO" id="GO:0042744">
    <property type="term" value="P:hydrogen peroxide catabolic process"/>
    <property type="evidence" value="ECO:0007669"/>
    <property type="project" value="TreeGrafter"/>
</dbReference>
<dbReference type="CDD" id="cd08927">
    <property type="entry name" value="Hb-alpha-like"/>
    <property type="match status" value="1"/>
</dbReference>
<dbReference type="FunFam" id="1.10.490.10:FF:000002">
    <property type="entry name" value="Hemoglobin subunit alpha"/>
    <property type="match status" value="1"/>
</dbReference>
<dbReference type="Gene3D" id="1.10.490.10">
    <property type="entry name" value="Globins"/>
    <property type="match status" value="1"/>
</dbReference>
<dbReference type="InterPro" id="IPR000971">
    <property type="entry name" value="Globin"/>
</dbReference>
<dbReference type="InterPro" id="IPR009050">
    <property type="entry name" value="Globin-like_sf"/>
</dbReference>
<dbReference type="InterPro" id="IPR012292">
    <property type="entry name" value="Globin/Proto"/>
</dbReference>
<dbReference type="InterPro" id="IPR002338">
    <property type="entry name" value="Hemoglobin_a-typ"/>
</dbReference>
<dbReference type="InterPro" id="IPR050056">
    <property type="entry name" value="Hemoglobin_oxygen_transport"/>
</dbReference>
<dbReference type="InterPro" id="IPR002339">
    <property type="entry name" value="Hemoglobin_pi"/>
</dbReference>
<dbReference type="PANTHER" id="PTHR11442">
    <property type="entry name" value="HEMOGLOBIN FAMILY MEMBER"/>
    <property type="match status" value="1"/>
</dbReference>
<dbReference type="PANTHER" id="PTHR11442:SF48">
    <property type="entry name" value="HEMOGLOBIN SUBUNIT ALPHA"/>
    <property type="match status" value="1"/>
</dbReference>
<dbReference type="Pfam" id="PF00042">
    <property type="entry name" value="Globin"/>
    <property type="match status" value="1"/>
</dbReference>
<dbReference type="PRINTS" id="PR00612">
    <property type="entry name" value="ALPHAHAEM"/>
</dbReference>
<dbReference type="PRINTS" id="PR00815">
    <property type="entry name" value="PIHAEM"/>
</dbReference>
<dbReference type="SUPFAM" id="SSF46458">
    <property type="entry name" value="Globin-like"/>
    <property type="match status" value="1"/>
</dbReference>
<dbReference type="PROSITE" id="PS01033">
    <property type="entry name" value="GLOBIN"/>
    <property type="match status" value="1"/>
</dbReference>
<sequence>VLTDAEKKEVTSLWGKASGHAEEYGAEALERLFLSFPTTKTYFSHMDLSKGSAQVKAHGKRVADALTTAAGHFNDMDSALSALSDLHAHKLRVDPVNFKLLAHCFLVVLARHHPAEFTPSAHAAMDKFLSRVATVLTSKYR</sequence>
<proteinExistence type="evidence at protein level"/>
<feature type="chain" id="PRO_0000052773" description="Hemoglobin subunit alpha-1">
    <location>
        <begin position="1"/>
        <end position="141"/>
    </location>
</feature>
<feature type="domain" description="Globin" evidence="1">
    <location>
        <begin position="1"/>
        <end position="141"/>
    </location>
</feature>
<feature type="binding site" evidence="1">
    <location>
        <position position="58"/>
    </location>
    <ligand>
        <name>O2</name>
        <dbReference type="ChEBI" id="CHEBI:15379"/>
    </ligand>
</feature>
<feature type="binding site" description="proximal binding residue" evidence="1">
    <location>
        <position position="87"/>
    </location>
    <ligand>
        <name>heme b</name>
        <dbReference type="ChEBI" id="CHEBI:60344"/>
    </ligand>
    <ligandPart>
        <name>Fe</name>
        <dbReference type="ChEBI" id="CHEBI:18248"/>
    </ligandPart>
</feature>
<feature type="sequence variant" description="In alpha-1 A variant.">
    <original>S</original>
    <variation>G</variation>
    <location>
        <position position="12"/>
    </location>
</feature>
<feature type="sequence variant" description="In alpha-1 A variant.">
    <original>S</original>
    <variation>N</variation>
    <location>
        <position position="78"/>
    </location>
</feature>
<feature type="sequence variant" description="In alpha-1 A variant.">
    <original>A</original>
    <variation>S</variation>
    <location>
        <position position="102"/>
    </location>
</feature>
<feature type="sequence variant" description="In alpha-1 A variant.">
    <original>A</original>
    <variation>E</variation>
    <location>
        <position position="115"/>
    </location>
</feature>
<keyword id="KW-0903">Direct protein sequencing</keyword>
<keyword id="KW-0349">Heme</keyword>
<keyword id="KW-0408">Iron</keyword>
<keyword id="KW-0479">Metal-binding</keyword>
<keyword id="KW-0561">Oxygen transport</keyword>
<keyword id="KW-0813">Transport</keyword>
<reference key="1">
    <citation type="journal article" date="1973" name="Aust. J. Biol. Sci.">
        <title>Studies on monotreme proteins. II. Amino acid sequence of the alpha-chain in haemoglobin from the echidna, Tachyglossus aculeatus aculeatus.</title>
        <authorList>
            <person name="Whittaker R.G."/>
            <person name="Fisher W.K."/>
            <person name="Thompson E.O.P."/>
        </authorList>
    </citation>
    <scope>PROTEIN SEQUENCE (VARIANT B)</scope>
</reference>
<reference key="2">
    <citation type="journal article" date="1974" name="Aust. J. Biol. Sci.">
        <title>Studies on monotreme proteins. IV. Amino acid sequence of haemoglobin-IA of the echidna; a comparison of major haemoglobins from two geographical groups of echidnas.</title>
        <authorList>
            <person name="Dodgson S.J."/>
            <person name="Fisher W.K."/>
            <person name="Thompson E.O.P."/>
        </authorList>
    </citation>
    <scope>PROTEIN SEQUENCE (VARIANT A)</scope>
</reference>
<accession>P01977</accession>
<organism>
    <name type="scientific">Tachyglossus aculeatus aculeatus</name>
    <name type="common">Southeast Australian short-beaked echidna</name>
    <dbReference type="NCBI Taxonomy" id="49271"/>
    <lineage>
        <taxon>Eukaryota</taxon>
        <taxon>Metazoa</taxon>
        <taxon>Chordata</taxon>
        <taxon>Craniata</taxon>
        <taxon>Vertebrata</taxon>
        <taxon>Euteleostomi</taxon>
        <taxon>Mammalia</taxon>
        <taxon>Monotremata</taxon>
        <taxon>Tachyglossidae</taxon>
        <taxon>Tachyglossus</taxon>
    </lineage>
</organism>
<name>HBA1_TACAC</name>